<protein>
    <recommendedName>
        <fullName>Myelin basic protein</fullName>
        <shortName>MBP</shortName>
    </recommendedName>
</protein>
<reference key="1">
    <citation type="journal article" date="1989" name="J. Mol. Evol.">
        <title>The myelin proteins of the shark brain are similar to the myelin proteins of the mammalian peripheral nervous system.</title>
        <authorList>
            <person name="Saavedra R.A."/>
            <person name="Fors L."/>
            <person name="Aebersold R.H."/>
            <person name="Arden B."/>
            <person name="Horvath S."/>
            <person name="Sanders J."/>
            <person name="Hood L."/>
        </authorList>
    </citation>
    <scope>NUCLEOTIDE SEQUENCE [MRNA]</scope>
    <source>
        <tissue>Brain</tissue>
    </source>
</reference>
<sequence length="155" mass="16634">MASASTSDHSKQAGGAHSRQRDSGLLDQLGKFFGQEGSRKVPEKGKEPATRSVLMAPTTHKAHQAAGRQTDDSAVVHFFKNMMSPKKAPVQQKARSGASRAITKFIWGTDGQRPHYGAAGSSKSKEAYRGRRDGSGTLSSFFKMGKKGEGSPARR</sequence>
<evidence type="ECO:0000250" key="1"/>
<evidence type="ECO:0000256" key="2">
    <source>
        <dbReference type="SAM" id="MobiDB-lite"/>
    </source>
</evidence>
<evidence type="ECO:0000305" key="3"/>
<proteinExistence type="evidence at transcript level"/>
<organism>
    <name type="scientific">Heterodontus francisci</name>
    <name type="common">Horn shark</name>
    <name type="synonym">Cestracion francisci</name>
    <dbReference type="NCBI Taxonomy" id="7792"/>
    <lineage>
        <taxon>Eukaryota</taxon>
        <taxon>Metazoa</taxon>
        <taxon>Chordata</taxon>
        <taxon>Craniata</taxon>
        <taxon>Vertebrata</taxon>
        <taxon>Chondrichthyes</taxon>
        <taxon>Elasmobranchii</taxon>
        <taxon>Galeomorphii</taxon>
        <taxon>Heterodontoidea</taxon>
        <taxon>Heterodontiformes</taxon>
        <taxon>Heterodontidae</taxon>
        <taxon>Heterodontus</taxon>
    </lineage>
</organism>
<name>MBP_HETFR</name>
<feature type="initiator methionine" description="Removed" evidence="1">
    <location>
        <position position="1"/>
    </location>
</feature>
<feature type="chain" id="PRO_0000158999" description="Myelin basic protein">
    <location>
        <begin position="2"/>
        <end position="155"/>
    </location>
</feature>
<feature type="region of interest" description="Disordered" evidence="2">
    <location>
        <begin position="1"/>
        <end position="70"/>
    </location>
</feature>
<feature type="region of interest" description="Disordered" evidence="2">
    <location>
        <begin position="109"/>
        <end position="155"/>
    </location>
</feature>
<feature type="compositionally biased region" description="Basic and acidic residues" evidence="2">
    <location>
        <begin position="37"/>
        <end position="49"/>
    </location>
</feature>
<feature type="compositionally biased region" description="Basic and acidic residues" evidence="2">
    <location>
        <begin position="123"/>
        <end position="134"/>
    </location>
</feature>
<feature type="modified residue" description="N-acetylalanine" evidence="1">
    <location>
        <position position="2"/>
    </location>
</feature>
<gene>
    <name type="primary">MBP</name>
</gene>
<accession>P20939</accession>
<comment type="function">
    <text>This protein may function to maintain proper structure of myelin.</text>
</comment>
<comment type="subcellular location">
    <subcellularLocation>
        <location>Myelin membrane</location>
        <topology>Peripheral membrane protein</topology>
        <orientation>Cytoplasmic side</orientation>
    </subcellularLocation>
    <text>Cytoplasmic side of myelin.</text>
</comment>
<comment type="similarity">
    <text evidence="3">Belongs to the myelin basic protein family.</text>
</comment>
<dbReference type="EMBL" id="X17664">
    <property type="protein sequence ID" value="CAA35661.1"/>
    <property type="molecule type" value="mRNA"/>
</dbReference>
<dbReference type="PIR" id="B32999">
    <property type="entry name" value="B32999"/>
</dbReference>
<dbReference type="SMR" id="P20939"/>
<dbReference type="GO" id="GO:0043209">
    <property type="term" value="C:myelin sheath"/>
    <property type="evidence" value="ECO:0007669"/>
    <property type="project" value="UniProtKB-SubCell"/>
</dbReference>
<dbReference type="GO" id="GO:0005886">
    <property type="term" value="C:plasma membrane"/>
    <property type="evidence" value="ECO:0007669"/>
    <property type="project" value="UniProtKB-KW"/>
</dbReference>
<dbReference type="GO" id="GO:0019911">
    <property type="term" value="F:structural constituent of myelin sheath"/>
    <property type="evidence" value="ECO:0007669"/>
    <property type="project" value="InterPro"/>
</dbReference>
<dbReference type="InterPro" id="IPR000548">
    <property type="entry name" value="Myelin_BP"/>
</dbReference>
<dbReference type="PANTHER" id="PTHR11429">
    <property type="entry name" value="MYELIN BASIC PROTEIN"/>
    <property type="match status" value="1"/>
</dbReference>
<dbReference type="PANTHER" id="PTHR11429:SF0">
    <property type="entry name" value="MYELIN BASIC PROTEIN"/>
    <property type="match status" value="1"/>
</dbReference>
<dbReference type="Pfam" id="PF01669">
    <property type="entry name" value="Myelin_MBP"/>
    <property type="match status" value="1"/>
</dbReference>
<dbReference type="PRINTS" id="PR00212">
    <property type="entry name" value="MYELINMBP"/>
</dbReference>
<dbReference type="PROSITE" id="PS00569">
    <property type="entry name" value="MYELIN_MBP"/>
    <property type="match status" value="1"/>
</dbReference>
<keyword id="KW-0007">Acetylation</keyword>
<keyword id="KW-1003">Cell membrane</keyword>
<keyword id="KW-0472">Membrane</keyword>
<keyword id="KW-0597">Phosphoprotein</keyword>